<reference key="1">
    <citation type="submission" date="1995-12" db="EMBL/GenBank/DDBJ databases">
        <authorList>
            <person name="Fini M.E."/>
            <person name="Scott S."/>
            <person name="Wang Z."/>
            <person name="Brown D.D."/>
        </authorList>
    </citation>
    <scope>NUCLEOTIDE SEQUENCE [MRNA]</scope>
    <source>
        <tissue>Tail</tissue>
    </source>
</reference>
<gene>
    <name type="primary">mmp13</name>
</gene>
<evidence type="ECO:0000250" key="1"/>
<evidence type="ECO:0000255" key="2"/>
<evidence type="ECO:0000255" key="3">
    <source>
        <dbReference type="PROSITE-ProRule" id="PRU10095"/>
    </source>
</evidence>
<evidence type="ECO:0000305" key="4"/>
<protein>
    <recommendedName>
        <fullName>Collagenase 3</fullName>
        <ecNumber>3.4.24.-</ecNumber>
    </recommendedName>
    <alternativeName>
        <fullName>Matrix metalloproteinase-13</fullName>
        <shortName>MMP-13</shortName>
    </alternativeName>
</protein>
<name>MMP13_XENLA</name>
<organism>
    <name type="scientific">Xenopus laevis</name>
    <name type="common">African clawed frog</name>
    <dbReference type="NCBI Taxonomy" id="8355"/>
    <lineage>
        <taxon>Eukaryota</taxon>
        <taxon>Metazoa</taxon>
        <taxon>Chordata</taxon>
        <taxon>Craniata</taxon>
        <taxon>Vertebrata</taxon>
        <taxon>Euteleostomi</taxon>
        <taxon>Amphibia</taxon>
        <taxon>Batrachia</taxon>
        <taxon>Anura</taxon>
        <taxon>Pipoidea</taxon>
        <taxon>Pipidae</taxon>
        <taxon>Xenopodinae</taxon>
        <taxon>Xenopus</taxon>
        <taxon>Xenopus</taxon>
    </lineage>
</organism>
<feature type="signal peptide" evidence="2">
    <location>
        <begin position="1" status="less than"/>
        <end position="17"/>
    </location>
</feature>
<feature type="propeptide" id="PRO_0000028796" description="Activation peptide" evidence="2">
    <location>
        <begin position="18"/>
        <end position="100"/>
    </location>
</feature>
<feature type="chain" id="PRO_0000028797" description="Collagenase 3">
    <location>
        <begin position="101"/>
        <end position="469"/>
    </location>
</feature>
<feature type="repeat" description="Hemopexin 1">
    <location>
        <begin position="279"/>
        <end position="328"/>
    </location>
</feature>
<feature type="repeat" description="Hemopexin 2">
    <location>
        <begin position="329"/>
        <end position="375"/>
    </location>
</feature>
<feature type="repeat" description="Hemopexin 3">
    <location>
        <begin position="377"/>
        <end position="425"/>
    </location>
</feature>
<feature type="repeat" description="Hemopexin 4">
    <location>
        <begin position="426"/>
        <end position="469"/>
    </location>
</feature>
<feature type="region of interest" description="Interaction with collagen" evidence="1">
    <location>
        <begin position="266"/>
        <end position="469"/>
    </location>
</feature>
<feature type="short sequence motif" description="Cysteine switch" evidence="1">
    <location>
        <begin position="92"/>
        <end position="99"/>
    </location>
</feature>
<feature type="active site" evidence="3">
    <location>
        <position position="221"/>
    </location>
</feature>
<feature type="binding site" description="in inhibited form" evidence="1">
    <location>
        <position position="94"/>
    </location>
    <ligand>
        <name>Zn(2+)</name>
        <dbReference type="ChEBI" id="CHEBI:29105"/>
        <label>2</label>
        <note>catalytic</note>
    </ligand>
</feature>
<feature type="binding site" evidence="1">
    <location>
        <position position="126"/>
    </location>
    <ligand>
        <name>Ca(2+)</name>
        <dbReference type="ChEBI" id="CHEBI:29108"/>
        <label>1</label>
    </ligand>
</feature>
<feature type="binding site" evidence="1">
    <location>
        <position position="160"/>
    </location>
    <ligand>
        <name>Ca(2+)</name>
        <dbReference type="ChEBI" id="CHEBI:29108"/>
        <label>2</label>
    </ligand>
</feature>
<feature type="binding site" evidence="1">
    <location>
        <position position="170"/>
    </location>
    <ligand>
        <name>Zn(2+)</name>
        <dbReference type="ChEBI" id="CHEBI:29105"/>
        <label>1</label>
    </ligand>
</feature>
<feature type="binding site" evidence="1">
    <location>
        <position position="172"/>
    </location>
    <ligand>
        <name>Zn(2+)</name>
        <dbReference type="ChEBI" id="CHEBI:29105"/>
        <label>1</label>
    </ligand>
</feature>
<feature type="binding site" evidence="1">
    <location>
        <position position="177"/>
    </location>
    <ligand>
        <name>Ca(2+)</name>
        <dbReference type="ChEBI" id="CHEBI:29108"/>
        <label>3</label>
    </ligand>
</feature>
<feature type="binding site" evidence="1">
    <location>
        <position position="178"/>
    </location>
    <ligand>
        <name>Ca(2+)</name>
        <dbReference type="ChEBI" id="CHEBI:29108"/>
        <label>3</label>
    </ligand>
</feature>
<feature type="binding site" evidence="1">
    <location>
        <position position="182"/>
    </location>
    <ligand>
        <name>Ca(2+)</name>
        <dbReference type="ChEBI" id="CHEBI:29108"/>
        <label>3</label>
    </ligand>
</feature>
<feature type="binding site" evidence="1">
    <location>
        <position position="185"/>
    </location>
    <ligand>
        <name>Zn(2+)</name>
        <dbReference type="ChEBI" id="CHEBI:29105"/>
        <label>1</label>
    </ligand>
</feature>
<feature type="binding site" evidence="1">
    <location>
        <position position="194"/>
    </location>
    <ligand>
        <name>Ca(2+)</name>
        <dbReference type="ChEBI" id="CHEBI:29108"/>
        <label>2</label>
    </ligand>
</feature>
<feature type="binding site" evidence="1">
    <location>
        <position position="196"/>
    </location>
    <ligand>
        <name>Ca(2+)</name>
        <dbReference type="ChEBI" id="CHEBI:29108"/>
        <label>2</label>
    </ligand>
</feature>
<feature type="binding site" evidence="1">
    <location>
        <position position="198"/>
    </location>
    <ligand>
        <name>Zn(2+)</name>
        <dbReference type="ChEBI" id="CHEBI:29105"/>
        <label>1</label>
    </ligand>
</feature>
<feature type="binding site" evidence="1">
    <location>
        <position position="200"/>
    </location>
    <ligand>
        <name>Ca(2+)</name>
        <dbReference type="ChEBI" id="CHEBI:29108"/>
        <label>3</label>
    </ligand>
</feature>
<feature type="binding site" evidence="1">
    <location>
        <position position="201"/>
    </location>
    <ligand>
        <name>Ca(2+)</name>
        <dbReference type="ChEBI" id="CHEBI:29108"/>
        <label>1</label>
    </ligand>
</feature>
<feature type="binding site" evidence="1">
    <location>
        <position position="203"/>
    </location>
    <ligand>
        <name>Ca(2+)</name>
        <dbReference type="ChEBI" id="CHEBI:29108"/>
        <label>1</label>
    </ligand>
</feature>
<feature type="binding site" evidence="1">
    <location>
        <position position="203"/>
    </location>
    <ligand>
        <name>Ca(2+)</name>
        <dbReference type="ChEBI" id="CHEBI:29108"/>
        <label>3</label>
    </ligand>
</feature>
<feature type="binding site" evidence="1">
    <location>
        <position position="220"/>
    </location>
    <ligand>
        <name>Zn(2+)</name>
        <dbReference type="ChEBI" id="CHEBI:29105"/>
        <label>2</label>
        <note>catalytic</note>
    </ligand>
</feature>
<feature type="binding site" evidence="1">
    <location>
        <position position="224"/>
    </location>
    <ligand>
        <name>Zn(2+)</name>
        <dbReference type="ChEBI" id="CHEBI:29105"/>
        <label>2</label>
        <note>catalytic</note>
    </ligand>
</feature>
<feature type="binding site" evidence="1">
    <location>
        <position position="230"/>
    </location>
    <ligand>
        <name>Zn(2+)</name>
        <dbReference type="ChEBI" id="CHEBI:29105"/>
        <label>2</label>
        <note>catalytic</note>
    </ligand>
</feature>
<feature type="binding site" evidence="1">
    <location>
        <position position="238"/>
    </location>
    <ligand>
        <name>Zn(2+)</name>
        <dbReference type="ChEBI" id="CHEBI:29105"/>
        <label>2</label>
        <note>catalytic</note>
    </ligand>
</feature>
<feature type="binding site" evidence="1">
    <location>
        <position position="289"/>
    </location>
    <ligand>
        <name>Ca(2+)</name>
        <dbReference type="ChEBI" id="CHEBI:29108"/>
        <label>4</label>
    </ligand>
</feature>
<feature type="binding site" evidence="1">
    <location>
        <position position="291"/>
    </location>
    <ligand>
        <name>Ca(2+)</name>
        <dbReference type="ChEBI" id="CHEBI:29108"/>
        <label>5</label>
    </ligand>
</feature>
<feature type="binding site" evidence="1">
    <location>
        <position position="333"/>
    </location>
    <ligand>
        <name>Ca(2+)</name>
        <dbReference type="ChEBI" id="CHEBI:29108"/>
        <label>4</label>
    </ligand>
</feature>
<feature type="binding site" evidence="1">
    <location>
        <position position="335"/>
    </location>
    <ligand>
        <name>Ca(2+)</name>
        <dbReference type="ChEBI" id="CHEBI:29108"/>
        <label>5</label>
    </ligand>
</feature>
<feature type="binding site" evidence="1">
    <location>
        <position position="383"/>
    </location>
    <ligand>
        <name>Ca(2+)</name>
        <dbReference type="ChEBI" id="CHEBI:29108"/>
        <label>5</label>
    </ligand>
</feature>
<feature type="binding site" evidence="1">
    <location>
        <position position="430"/>
    </location>
    <ligand>
        <name>Ca(2+)</name>
        <dbReference type="ChEBI" id="CHEBI:29108"/>
        <label>4</label>
    </ligand>
</feature>
<feature type="glycosylation site" description="N-linked (GlcNAc...) asparagine" evidence="2">
    <location>
        <position position="115"/>
    </location>
</feature>
<feature type="glycosylation site" description="N-linked (GlcNAc...) asparagine" evidence="2">
    <location>
        <position position="150"/>
    </location>
</feature>
<feature type="disulfide bond" evidence="1">
    <location>
        <begin position="282"/>
        <end position="469"/>
    </location>
</feature>
<feature type="non-terminal residue">
    <location>
        <position position="1"/>
    </location>
</feature>
<sequence>SSLSVLVLSLSFAYCLSAPVPQDEDSELTPGDLQLAEHYLNRLYSSSSNPVGMLRMKNVNSIETKLKEMQSFFGLEVTGKLNEDTLDIMKQPRCGVPDVGQYNFFPRKLKWPRNNLTYRIVNYTPDLSTSEVDRAIKKALKVWSDVTPLNFTRLRTGTADIMVSFGKKEHGDYYPFDGPDGLLAHAFPPGEKLGGDTHFDDDEMFSTDNKGYNLFVVAAHEFGHALGLDHSRDPGSLMFPVYTYTETSRFVLPDDDVQGIQVLYGPGNRDPHPKHPKTPEKCDPDLSIDAITELRGEKMIFKDRFFWRVHPQMTDAELVLIKSFWPELPNKLDAAYEHPAKDLSYLFRGKKFWALNGYDIVEDYPKKLHELGFPKTLKAIDAAVYNKDTGKTFFFTEDSYWSFDEEARTLDKGFPRLISEDFPGIGEKVDAAYQRNGYLYFFNGALQFEYSIWSQRITRILKTNFVLMC</sequence>
<accession>Q10835</accession>
<proteinExistence type="evidence at transcript level"/>
<dbReference type="EC" id="3.4.24.-"/>
<dbReference type="EMBL" id="L49412">
    <property type="protein sequence ID" value="AAA83996.1"/>
    <property type="molecule type" value="mRNA"/>
</dbReference>
<dbReference type="SMR" id="Q10835"/>
<dbReference type="MEROPS" id="M10.013"/>
<dbReference type="GlyCosmos" id="Q10835">
    <property type="glycosylation" value="2 sites, No reported glycans"/>
</dbReference>
<dbReference type="AGR" id="Xenbase:XB-GENE-17331012"/>
<dbReference type="Xenbase" id="XB-GENE-17331012">
    <property type="gene designation" value="mmp13l.L"/>
</dbReference>
<dbReference type="BRENDA" id="3.4.24.B4">
    <property type="organism ID" value="6725"/>
</dbReference>
<dbReference type="Proteomes" id="UP000186698">
    <property type="component" value="Unplaced"/>
</dbReference>
<dbReference type="GO" id="GO:0031012">
    <property type="term" value="C:extracellular matrix"/>
    <property type="evidence" value="ECO:0007669"/>
    <property type="project" value="InterPro"/>
</dbReference>
<dbReference type="GO" id="GO:0005615">
    <property type="term" value="C:extracellular space"/>
    <property type="evidence" value="ECO:0000318"/>
    <property type="project" value="GO_Central"/>
</dbReference>
<dbReference type="GO" id="GO:0005509">
    <property type="term" value="F:calcium ion binding"/>
    <property type="evidence" value="ECO:0000250"/>
    <property type="project" value="UniProtKB"/>
</dbReference>
<dbReference type="GO" id="GO:0005518">
    <property type="term" value="F:collagen binding"/>
    <property type="evidence" value="ECO:0000250"/>
    <property type="project" value="UniProtKB"/>
</dbReference>
<dbReference type="GO" id="GO:0004222">
    <property type="term" value="F:metalloendopeptidase activity"/>
    <property type="evidence" value="ECO:0000250"/>
    <property type="project" value="UniProtKB"/>
</dbReference>
<dbReference type="GO" id="GO:0008270">
    <property type="term" value="F:zinc ion binding"/>
    <property type="evidence" value="ECO:0000250"/>
    <property type="project" value="UniProtKB"/>
</dbReference>
<dbReference type="GO" id="GO:0060349">
    <property type="term" value="P:bone morphogenesis"/>
    <property type="evidence" value="ECO:0000250"/>
    <property type="project" value="UniProtKB"/>
</dbReference>
<dbReference type="GO" id="GO:0030574">
    <property type="term" value="P:collagen catabolic process"/>
    <property type="evidence" value="ECO:0000250"/>
    <property type="project" value="UniProtKB"/>
</dbReference>
<dbReference type="GO" id="GO:0022617">
    <property type="term" value="P:extracellular matrix disassembly"/>
    <property type="evidence" value="ECO:0000250"/>
    <property type="project" value="UniProtKB"/>
</dbReference>
<dbReference type="GO" id="GO:0030198">
    <property type="term" value="P:extracellular matrix organization"/>
    <property type="evidence" value="ECO:0000318"/>
    <property type="project" value="GO_Central"/>
</dbReference>
<dbReference type="GO" id="GO:0006508">
    <property type="term" value="P:proteolysis"/>
    <property type="evidence" value="ECO:0007669"/>
    <property type="project" value="UniProtKB-KW"/>
</dbReference>
<dbReference type="CDD" id="cd00094">
    <property type="entry name" value="HX"/>
    <property type="match status" value="1"/>
</dbReference>
<dbReference type="CDD" id="cd04278">
    <property type="entry name" value="ZnMc_MMP"/>
    <property type="match status" value="1"/>
</dbReference>
<dbReference type="FunFam" id="3.40.390.10:FF:000007">
    <property type="entry name" value="Collagenase 3"/>
    <property type="match status" value="1"/>
</dbReference>
<dbReference type="FunFam" id="2.110.10.10:FF:000002">
    <property type="entry name" value="Matrix metallopeptidase 3"/>
    <property type="match status" value="1"/>
</dbReference>
<dbReference type="Gene3D" id="3.40.390.10">
    <property type="entry name" value="Collagenase (Catalytic Domain)"/>
    <property type="match status" value="1"/>
</dbReference>
<dbReference type="Gene3D" id="2.110.10.10">
    <property type="entry name" value="Hemopexin-like domain"/>
    <property type="match status" value="1"/>
</dbReference>
<dbReference type="InterPro" id="IPR000585">
    <property type="entry name" value="Hemopexin-like_dom"/>
</dbReference>
<dbReference type="InterPro" id="IPR036375">
    <property type="entry name" value="Hemopexin-like_dom_sf"/>
</dbReference>
<dbReference type="InterPro" id="IPR018487">
    <property type="entry name" value="Hemopexin-like_repeat"/>
</dbReference>
<dbReference type="InterPro" id="IPR018486">
    <property type="entry name" value="Hemopexin_CS"/>
</dbReference>
<dbReference type="InterPro" id="IPR033739">
    <property type="entry name" value="M10A_MMP"/>
</dbReference>
<dbReference type="InterPro" id="IPR024079">
    <property type="entry name" value="MetalloPept_cat_dom_sf"/>
</dbReference>
<dbReference type="InterPro" id="IPR001818">
    <property type="entry name" value="Pept_M10_metallopeptidase"/>
</dbReference>
<dbReference type="InterPro" id="IPR021190">
    <property type="entry name" value="Pept_M10A"/>
</dbReference>
<dbReference type="InterPro" id="IPR021158">
    <property type="entry name" value="Pept_M10A_Zn_BS"/>
</dbReference>
<dbReference type="InterPro" id="IPR006026">
    <property type="entry name" value="Peptidase_Metallo"/>
</dbReference>
<dbReference type="InterPro" id="IPR002477">
    <property type="entry name" value="Peptidoglycan-bd-like"/>
</dbReference>
<dbReference type="InterPro" id="IPR036365">
    <property type="entry name" value="PGBD-like_sf"/>
</dbReference>
<dbReference type="PANTHER" id="PTHR10201:SF165">
    <property type="entry name" value="COLLAGENASE 3"/>
    <property type="match status" value="1"/>
</dbReference>
<dbReference type="PANTHER" id="PTHR10201">
    <property type="entry name" value="MATRIX METALLOPROTEINASE"/>
    <property type="match status" value="1"/>
</dbReference>
<dbReference type="Pfam" id="PF00045">
    <property type="entry name" value="Hemopexin"/>
    <property type="match status" value="4"/>
</dbReference>
<dbReference type="Pfam" id="PF00413">
    <property type="entry name" value="Peptidase_M10"/>
    <property type="match status" value="1"/>
</dbReference>
<dbReference type="Pfam" id="PF01471">
    <property type="entry name" value="PG_binding_1"/>
    <property type="match status" value="1"/>
</dbReference>
<dbReference type="PIRSF" id="PIRSF001191">
    <property type="entry name" value="Peptidase_M10A_matrix"/>
    <property type="match status" value="1"/>
</dbReference>
<dbReference type="PRINTS" id="PR00138">
    <property type="entry name" value="MATRIXIN"/>
</dbReference>
<dbReference type="SMART" id="SM00120">
    <property type="entry name" value="HX"/>
    <property type="match status" value="4"/>
</dbReference>
<dbReference type="SMART" id="SM00235">
    <property type="entry name" value="ZnMc"/>
    <property type="match status" value="1"/>
</dbReference>
<dbReference type="SUPFAM" id="SSF50923">
    <property type="entry name" value="Hemopexin-like domain"/>
    <property type="match status" value="1"/>
</dbReference>
<dbReference type="SUPFAM" id="SSF55486">
    <property type="entry name" value="Metalloproteases ('zincins'), catalytic domain"/>
    <property type="match status" value="1"/>
</dbReference>
<dbReference type="SUPFAM" id="SSF47090">
    <property type="entry name" value="PGBD-like"/>
    <property type="match status" value="1"/>
</dbReference>
<dbReference type="PROSITE" id="PS00546">
    <property type="entry name" value="CYSTEINE_SWITCH"/>
    <property type="match status" value="1"/>
</dbReference>
<dbReference type="PROSITE" id="PS00024">
    <property type="entry name" value="HEMOPEXIN"/>
    <property type="match status" value="1"/>
</dbReference>
<dbReference type="PROSITE" id="PS51642">
    <property type="entry name" value="HEMOPEXIN_2"/>
    <property type="match status" value="4"/>
</dbReference>
<dbReference type="PROSITE" id="PS00142">
    <property type="entry name" value="ZINC_PROTEASE"/>
    <property type="match status" value="1"/>
</dbReference>
<comment type="function">
    <text evidence="1">Plays a role in the degradation of extracellular matrix proteins including fibrillar collagen, fibronectin, TNC and ACAN. Cleaves several types of triple helical collagen. May also function by activating or degrading key regulatory proteins. Plays a role in wound healing, tissue remodeling, cartilage degradation, bone development, bone mineralization and ossification (By similarity).</text>
</comment>
<comment type="cofactor">
    <cofactor evidence="1">
        <name>Ca(2+)</name>
        <dbReference type="ChEBI" id="CHEBI:29108"/>
    </cofactor>
    <text evidence="1">Can bind about 5 Ca(2+) ions per subunit.</text>
</comment>
<comment type="cofactor">
    <cofactor evidence="1">
        <name>Zn(2+)</name>
        <dbReference type="ChEBI" id="CHEBI:29105"/>
    </cofactor>
    <text evidence="1">Binds 2 Zn(2+) ions per subunit.</text>
</comment>
<comment type="subcellular location">
    <subcellularLocation>
        <location evidence="1">Secreted</location>
        <location evidence="1">Extracellular space</location>
        <location evidence="1">Extracellular matrix</location>
    </subcellularLocation>
    <subcellularLocation>
        <location evidence="1">Secreted</location>
    </subcellularLocation>
</comment>
<comment type="developmental stage">
    <text>Up-regulated by thyroid hormone in tadpoles during tail resorption.</text>
</comment>
<comment type="domain">
    <text evidence="1">The C-terminal region binds to collagen.</text>
</comment>
<comment type="domain">
    <text evidence="1">The conserved cysteine present in the cysteine-switch motif binds the catalytic zinc ion, thus inhibiting the enzyme. The dissociation of the cysteine from the zinc ion upon the activation-peptide release activates the enzyme (By similarity).</text>
</comment>
<comment type="PTM">
    <text evidence="1">The proenzyme is activated by removal of the propeptide; this cleavage can be effected by other matrix metalloproteinases and may involve several cleavage steps. Cleavage can also be autocatalytic, after partial maturation by another protease or after treatment with 4-aminophenylmercuric acetate (APMA) (in vitro) (By similarity).</text>
</comment>
<comment type="miscellaneous">
    <text>The Xenopus genome contains two genes coding for very similar enzymes: MMP-13 and MMP-13A.</text>
</comment>
<comment type="similarity">
    <text evidence="4">Belongs to the peptidase M10A family.</text>
</comment>
<keyword id="KW-0106">Calcium</keyword>
<keyword id="KW-0177">Collagen degradation</keyword>
<keyword id="KW-1015">Disulfide bond</keyword>
<keyword id="KW-0272">Extracellular matrix</keyword>
<keyword id="KW-0325">Glycoprotein</keyword>
<keyword id="KW-0378">Hydrolase</keyword>
<keyword id="KW-0479">Metal-binding</keyword>
<keyword id="KW-0482">Metalloprotease</keyword>
<keyword id="KW-0645">Protease</keyword>
<keyword id="KW-1185">Reference proteome</keyword>
<keyword id="KW-0677">Repeat</keyword>
<keyword id="KW-0964">Secreted</keyword>
<keyword id="KW-0732">Signal</keyword>
<keyword id="KW-0862">Zinc</keyword>
<keyword id="KW-0865">Zymogen</keyword>